<name>KPBB_MOUSE</name>
<sequence>MANSPDAAFSSPALLRSGSVYEPLKSINLPRPDNETLWDKLDHYYRIVKSTMLMYQSPTTGLFPTKTCGGEEKSKVHESLYCAAGAWALALAYRRIDDDKGRTHELEHSAIKCMRGILYCYMRQADKVQQFKQDPRPTTCLHSVFSVHTGDELLSYEEYGHLQINAVSLFLLYLVEMISSGLQIIYNTDEVSFIQNLVFCVERVYRVPDFGVWERGSKYNNGSTELHSSSVGLAKAALEAINGFNLFGNQGCSWSVIFVDLDAHNRNRQTLCSLLPRESRSHNTDAALLPCISYPAFALDDEALFSQTLDKVIRKLKGKYGFKRFLRDGYRTPLEDPNRRYYKPAEIKLFDGIECEFPIFFLYMMIDGVFRGNLEQVKEYQDLLTPLLHQTTEGYPVVPKYYYVPADFVECEKRNPGSQKRFPSNCGRDGKLFLWGQALYIIAKLLADELISPKDIDPVQRFVPLQNQRNVSMRYSNQGPLENDLVVHVALVAESQRLQVFLNTYGIQTQTPQQVEPIQIWPQQELVKAYFHLGINEKLGLSGRPDRPIGCLGTSKIYRILGKTVVCYPIIFDLSDFYMSQDVLLLIDDIKNALQFIKQYWKMHGRPLFLVLIREDNIRGSRFNPILDMLAAFKKGIIGGVKVHVDRLQTLISGAVVEQLDFLRISDTEKLPEFKSFEELEFPKHSKVKRQSSTADAPEAQHEPGITITEWKNKSTHEILQKLNDCGCLAGQTILLGILLKREGPNFITMEGTVSDHIERVYRRAGSKKLWSVVRRAASLLNKVVDSLAPSITNVLVQGKQVTLGAFGHEEEVISNPLSPRVIKNIIYYKCNTHDEREAVIQQELVIHIGWIISNSPELFSGMLKIRIGWIIHAMEYELQVRGGDKPAVDLYQLSPSEVKQLLLDILQPQQSGRCWLNRRQIDGSLNRTPPEFYDRVWQILERTPNGIVVAGKHLPQQPTLSDMTMYEMNFSLLVEDMLGNIDQPKYRQIIVELLMVVSIVLERNPELEFQDKVDLDRLVKEAFHEFQKDESRLKEIEKQDDMTSFYNTPPLGKRGTCSYLTKVVMNSLLEGEVKPSNEDSCLVS</sequence>
<reference key="1">
    <citation type="journal article" date="2004" name="Genome Res.">
        <title>The status, quality, and expansion of the NIH full-length cDNA project: the Mammalian Gene Collection (MGC).</title>
        <authorList>
            <consortium name="The MGC Project Team"/>
        </authorList>
    </citation>
    <scope>NUCLEOTIDE SEQUENCE [LARGE SCALE MRNA]</scope>
    <source>
        <strain>C57BL/6J</strain>
        <tissue>Brain</tissue>
    </source>
</reference>
<reference key="2">
    <citation type="journal article" date="2007" name="Proc. Natl. Acad. Sci. U.S.A.">
        <title>Large-scale phosphorylation analysis of mouse liver.</title>
        <authorList>
            <person name="Villen J."/>
            <person name="Beausoleil S.A."/>
            <person name="Gerber S.A."/>
            <person name="Gygi S.P."/>
        </authorList>
    </citation>
    <scope>IDENTIFICATION BY MASS SPECTROMETRY [LARGE SCALE ANALYSIS]</scope>
    <source>
        <tissue>Liver</tissue>
    </source>
</reference>
<reference key="3">
    <citation type="journal article" date="2010" name="Cell">
        <title>A tissue-specific atlas of mouse protein phosphorylation and expression.</title>
        <authorList>
            <person name="Huttlin E.L."/>
            <person name="Jedrychowski M.P."/>
            <person name="Elias J.E."/>
            <person name="Goswami T."/>
            <person name="Rad R."/>
            <person name="Beausoleil S.A."/>
            <person name="Villen J."/>
            <person name="Haas W."/>
            <person name="Sowa M.E."/>
            <person name="Gygi S.P."/>
        </authorList>
    </citation>
    <scope>PHOSPHORYLATION [LARGE SCALE ANALYSIS] AT SER-19</scope>
    <scope>IDENTIFICATION BY MASS SPECTROMETRY [LARGE SCALE ANALYSIS]</scope>
    <source>
        <tissue>Brain</tissue>
        <tissue>Brown adipose tissue</tissue>
        <tissue>Heart</tissue>
        <tissue>Kidney</tissue>
        <tissue>Liver</tissue>
        <tissue>Lung</tissue>
        <tissue>Spleen</tissue>
        <tissue>Testis</tissue>
    </source>
</reference>
<protein>
    <recommendedName>
        <fullName>Phosphorylase b kinase regulatory subunit beta</fullName>
        <shortName>Phosphorylase kinase subunit beta</shortName>
    </recommendedName>
</protein>
<organism>
    <name type="scientific">Mus musculus</name>
    <name type="common">Mouse</name>
    <dbReference type="NCBI Taxonomy" id="10090"/>
    <lineage>
        <taxon>Eukaryota</taxon>
        <taxon>Metazoa</taxon>
        <taxon>Chordata</taxon>
        <taxon>Craniata</taxon>
        <taxon>Vertebrata</taxon>
        <taxon>Euteleostomi</taxon>
        <taxon>Mammalia</taxon>
        <taxon>Eutheria</taxon>
        <taxon>Euarchontoglires</taxon>
        <taxon>Glires</taxon>
        <taxon>Rodentia</taxon>
        <taxon>Myomorpha</taxon>
        <taxon>Muroidea</taxon>
        <taxon>Muridae</taxon>
        <taxon>Murinae</taxon>
        <taxon>Mus</taxon>
        <taxon>Mus</taxon>
    </lineage>
</organism>
<evidence type="ECO:0000250" key="1"/>
<evidence type="ECO:0000250" key="2">
    <source>
        <dbReference type="UniProtKB" id="P12798"/>
    </source>
</evidence>
<evidence type="ECO:0000255" key="3"/>
<evidence type="ECO:0000305" key="4"/>
<evidence type="ECO:0007744" key="5">
    <source>
    </source>
</evidence>
<keyword id="KW-0112">Calmodulin-binding</keyword>
<keyword id="KW-0119">Carbohydrate metabolism</keyword>
<keyword id="KW-1003">Cell membrane</keyword>
<keyword id="KW-0321">Glycogen metabolism</keyword>
<keyword id="KW-0449">Lipoprotein</keyword>
<keyword id="KW-0472">Membrane</keyword>
<keyword id="KW-0597">Phosphoprotein</keyword>
<keyword id="KW-0636">Prenylation</keyword>
<keyword id="KW-1185">Reference proteome</keyword>
<feature type="chain" id="PRO_0000057737" description="Phosphorylase b kinase regulatory subunit beta">
    <location>
        <begin position="1"/>
        <end position="1085"/>
    </location>
</feature>
<feature type="region of interest" description="Calmodulin-binding" evidence="3">
    <location>
        <begin position="760"/>
        <end position="787"/>
    </location>
</feature>
<feature type="region of interest" description="Calmodulin-binding" evidence="3">
    <location>
        <begin position="912"/>
        <end position="943"/>
    </location>
</feature>
<feature type="modified residue" description="Phosphoserine" evidence="2">
    <location>
        <position position="10"/>
    </location>
</feature>
<feature type="modified residue" description="Phosphoserine" evidence="5">
    <location>
        <position position="19"/>
    </location>
</feature>
<feature type="modified residue" description="Phosphoserine" evidence="2">
    <location>
        <position position="693"/>
    </location>
</feature>
<feature type="lipid moiety-binding region" description="S-farnesyl cysteine" evidence="2">
    <location>
        <position position="1082"/>
    </location>
</feature>
<proteinExistence type="evidence at protein level"/>
<comment type="function">
    <text evidence="1">Phosphorylase b kinase catalyzes the phosphorylation of serine in certain substrates, including troponin I. The beta chain acts as a regulatory unit and modulates the activity of the holoenzyme in response to phosphorylation (By similarity).</text>
</comment>
<comment type="activity regulation">
    <text evidence="1">By phosphorylation of various serine residues.</text>
</comment>
<comment type="pathway">
    <text>Glycan biosynthesis; glycogen metabolism.</text>
</comment>
<comment type="subunit">
    <text evidence="1">Hexadecamer of 4 heterotetramers, each composed of alpha, beta, gamma, and delta subunits. Alpha (PHKA1 or PHKA2) and beta (PHKB) are regulatory subunits, gamma (PHKG1 or PHKG2) is the catalytic subunit, and delta is calmodulin (By similarity).</text>
</comment>
<comment type="subcellular location">
    <subcellularLocation>
        <location evidence="4">Cell membrane</location>
        <topology evidence="4">Lipid-anchor</topology>
        <orientation evidence="4">Cytoplasmic side</orientation>
    </subcellularLocation>
</comment>
<comment type="PTM">
    <text evidence="2">Although the final Cys may be farnesylated, the terminal tripeptide is probably not removed, and the C-terminus is not methylated.</text>
</comment>
<comment type="similarity">
    <text evidence="4">Belongs to the phosphorylase b kinase regulatory chain family.</text>
</comment>
<accession>Q7TSH2</accession>
<dbReference type="EMBL" id="BC053105">
    <property type="protein sequence ID" value="AAH53105.1"/>
    <property type="molecule type" value="mRNA"/>
</dbReference>
<dbReference type="CCDS" id="CCDS22501.1"/>
<dbReference type="RefSeq" id="NP_001390846.1">
    <property type="nucleotide sequence ID" value="NM_001403917.1"/>
</dbReference>
<dbReference type="RefSeq" id="NP_001390847.1">
    <property type="nucleotide sequence ID" value="NM_001403918.1"/>
</dbReference>
<dbReference type="RefSeq" id="NP_955517.1">
    <property type="nucleotide sequence ID" value="NM_199446.3"/>
</dbReference>
<dbReference type="RefSeq" id="XP_006530595.1">
    <property type="nucleotide sequence ID" value="XM_006530532.3"/>
</dbReference>
<dbReference type="RefSeq" id="XP_006530596.1">
    <property type="nucleotide sequence ID" value="XM_006530533.5"/>
</dbReference>
<dbReference type="RefSeq" id="XP_006530597.1">
    <property type="nucleotide sequence ID" value="XM_006530534.3"/>
</dbReference>
<dbReference type="SMR" id="Q7TSH2"/>
<dbReference type="BioGRID" id="221792">
    <property type="interactions" value="6"/>
</dbReference>
<dbReference type="FunCoup" id="Q7TSH2">
    <property type="interactions" value="785"/>
</dbReference>
<dbReference type="IntAct" id="Q7TSH2">
    <property type="interactions" value="3"/>
</dbReference>
<dbReference type="MINT" id="Q7TSH2"/>
<dbReference type="STRING" id="10090.ENSMUSP00000050788"/>
<dbReference type="GlyGen" id="Q7TSH2">
    <property type="glycosylation" value="3 sites, 2 N-linked glycans (2 sites), 1 O-linked glycan (1 site)"/>
</dbReference>
<dbReference type="iPTMnet" id="Q7TSH2"/>
<dbReference type="PhosphoSitePlus" id="Q7TSH2"/>
<dbReference type="SwissPalm" id="Q7TSH2"/>
<dbReference type="jPOST" id="Q7TSH2"/>
<dbReference type="PaxDb" id="10090-ENSMUSP00000050788"/>
<dbReference type="PeptideAtlas" id="Q7TSH2"/>
<dbReference type="ProteomicsDB" id="265018"/>
<dbReference type="Pumba" id="Q7TSH2"/>
<dbReference type="Antibodypedia" id="28116">
    <property type="antibodies" value="180 antibodies from 29 providers"/>
</dbReference>
<dbReference type="DNASU" id="102093"/>
<dbReference type="Ensembl" id="ENSMUST00000053771.14">
    <property type="protein sequence ID" value="ENSMUSP00000050788.8"/>
    <property type="gene ID" value="ENSMUSG00000036879.17"/>
</dbReference>
<dbReference type="GeneID" id="102093"/>
<dbReference type="KEGG" id="mmu:102093"/>
<dbReference type="UCSC" id="uc009mqj.1">
    <property type="organism name" value="mouse"/>
</dbReference>
<dbReference type="AGR" id="MGI:97578"/>
<dbReference type="CTD" id="5257"/>
<dbReference type="MGI" id="MGI:97578">
    <property type="gene designation" value="Phkb"/>
</dbReference>
<dbReference type="VEuPathDB" id="HostDB:ENSMUSG00000036879"/>
<dbReference type="eggNOG" id="KOG3635">
    <property type="taxonomic scope" value="Eukaryota"/>
</dbReference>
<dbReference type="GeneTree" id="ENSGT00950000183118"/>
<dbReference type="HOGENOM" id="CLU_004177_0_1_1"/>
<dbReference type="InParanoid" id="Q7TSH2"/>
<dbReference type="OMA" id="CWIKQAH"/>
<dbReference type="PhylomeDB" id="Q7TSH2"/>
<dbReference type="TreeFam" id="TF313970"/>
<dbReference type="Reactome" id="R-MMU-70221">
    <property type="pathway name" value="Glycogen breakdown (glycogenolysis)"/>
</dbReference>
<dbReference type="UniPathway" id="UPA00163"/>
<dbReference type="BioGRID-ORCS" id="102093">
    <property type="hits" value="1 hit in 78 CRISPR screens"/>
</dbReference>
<dbReference type="ChiTaRS" id="Phkb">
    <property type="organism name" value="mouse"/>
</dbReference>
<dbReference type="PRO" id="PR:Q7TSH2"/>
<dbReference type="Proteomes" id="UP000000589">
    <property type="component" value="Chromosome 8"/>
</dbReference>
<dbReference type="RNAct" id="Q7TSH2">
    <property type="molecule type" value="protein"/>
</dbReference>
<dbReference type="Bgee" id="ENSMUSG00000036879">
    <property type="expression patterns" value="Expressed in quadriceps femoris and 251 other cell types or tissues"/>
</dbReference>
<dbReference type="ExpressionAtlas" id="Q7TSH2">
    <property type="expression patterns" value="baseline and differential"/>
</dbReference>
<dbReference type="GO" id="GO:0005886">
    <property type="term" value="C:plasma membrane"/>
    <property type="evidence" value="ECO:0007669"/>
    <property type="project" value="UniProtKB-SubCell"/>
</dbReference>
<dbReference type="GO" id="GO:0005516">
    <property type="term" value="F:calmodulin binding"/>
    <property type="evidence" value="ECO:0007669"/>
    <property type="project" value="UniProtKB-KW"/>
</dbReference>
<dbReference type="GO" id="GO:0042593">
    <property type="term" value="P:glucose homeostasis"/>
    <property type="evidence" value="ECO:0000315"/>
    <property type="project" value="FlyBase"/>
</dbReference>
<dbReference type="GO" id="GO:0005977">
    <property type="term" value="P:glycogen metabolic process"/>
    <property type="evidence" value="ECO:0007669"/>
    <property type="project" value="UniProtKB-UniPathway"/>
</dbReference>
<dbReference type="GO" id="GO:0045819">
    <property type="term" value="P:positive regulation of glycogen catabolic process"/>
    <property type="evidence" value="ECO:0000315"/>
    <property type="project" value="FlyBase"/>
</dbReference>
<dbReference type="InterPro" id="IPR008928">
    <property type="entry name" value="6-hairpin_glycosidase_sf"/>
</dbReference>
<dbReference type="InterPro" id="IPR011613">
    <property type="entry name" value="GH15-like"/>
</dbReference>
<dbReference type="InterPro" id="IPR045583">
    <property type="entry name" value="KPBA/B_C"/>
</dbReference>
<dbReference type="InterPro" id="IPR008734">
    <property type="entry name" value="PHK_A/B_su"/>
</dbReference>
<dbReference type="PANTHER" id="PTHR10749">
    <property type="entry name" value="PHOSPHORYLASE B KINASE REGULATORY SUBUNIT"/>
    <property type="match status" value="1"/>
</dbReference>
<dbReference type="PANTHER" id="PTHR10749:SF8">
    <property type="entry name" value="PHOSPHORYLASE B KINASE REGULATORY SUBUNIT BETA"/>
    <property type="match status" value="1"/>
</dbReference>
<dbReference type="Pfam" id="PF00723">
    <property type="entry name" value="Glyco_hydro_15"/>
    <property type="match status" value="1"/>
</dbReference>
<dbReference type="Pfam" id="PF19292">
    <property type="entry name" value="KPBB_C"/>
    <property type="match status" value="1"/>
</dbReference>
<dbReference type="SUPFAM" id="SSF48208">
    <property type="entry name" value="Six-hairpin glycosidases"/>
    <property type="match status" value="1"/>
</dbReference>
<gene>
    <name type="primary">Phkb</name>
</gene>